<accession>P0CX72</accession>
<accession>D3DM44</accession>
<accession>Q12162</accession>
<comment type="function">
    <text evidence="1">Capsid protein (CA) is the structural component of the virus-like particle (VLP), forming the shell that encapsulates the retrotransposons dimeric RNA genome. The particles are assembled from trimer-clustered units and there are holes in the capsid shells that allow for the diffusion of macromolecules. CA also has nucleocapsid-like chaperone activity, promoting primer tRNA(i)-Met annealing to the multipartite primer-binding site (PBS), dimerization of Ty1 RNA and initiation of reverse transcription (By similarity).</text>
</comment>
<comment type="subunit">
    <text evidence="1">Homotrimer.</text>
</comment>
<comment type="subcellular location">
    <subcellularLocation>
        <location evidence="1">Cytoplasm</location>
    </subcellularLocation>
</comment>
<comment type="alternative products">
    <event type="ribosomal frameshifting"/>
    <isoform>
        <id>P0CX72-1</id>
        <name>Transposon Ty1-LR2 Gag polyprotein</name>
        <sequence type="displayed"/>
    </isoform>
    <isoform>
        <id>P0C2I5-1</id>
        <name>Transposon Ty1-LR2 Gag-Pol polyprotein</name>
        <sequence type="external"/>
    </isoform>
    <text evidence="1">The Gag-Pol polyprotein is generated by a +1 ribosomal frameshift. The ratio of Gag:Gag-Pol varies between 20:1 and 5:1 (By similarity).</text>
</comment>
<comment type="induction">
    <text evidence="4">Ty1-LR2 is a weakly expressed element. Induced under amino acid starvation conditions by GCN4.</text>
</comment>
<comment type="domain">
    <text evidence="1">The C-terminal RNA-binding region of CA is sufficient for all its nucleocapsid-like chaperone activities.</text>
</comment>
<comment type="miscellaneous">
    <text>Retrotransposons are mobile genetic entities that are able to replicate via an RNA intermediate and a reverse transcription step. In contrast to retroviruses, retrotransposons are non-infectious, lack an envelope and remain intracellular. Ty1 retrotransposons belong to the copia elements (pseudoviridae).</text>
</comment>
<comment type="miscellaneous">
    <molecule>Isoform Transposon Ty1-LR2 Gag polyprotein</molecule>
    <text>Produced by conventional translation.</text>
</comment>
<sequence length="440" mass="48953">MESQQLSQHSPISHGSACASVTSKEVHTNQDPLDVSASKTEECEKASTKANSQQTTTPASSAVPENPHHASPQPASVPPPQNGPYPQQCMMTQNQANPSGWSFYGHPSMIPYTPYQMSPMYFPPGPQSQFPQYPSSVGTPLSTPSPESGNTFTDSSSADSDMTSTKKYVRPPPMLTSPNDFPNWVKTYIKFLQNSNLGGIIPTVNGKPVRQITDDELTFLYNTFQIFAPSQFLPTWVKDILSVDYTDIMKILSKSIEKMQSDTQEANDIVTLANLQYNGSTPADAFETKVTNIIDRLNNNGIHINNKVACQLIMRGLSGEYKFLRYTRHRHLNMTVAELFLDIHAIYEEQQGSRNSKPNYRRNLSDEKNDSRSYTNTTKPKVIARNPQKTNNSKSKTARAHNVSTSNNSPSTDNDSISKSTTEPIQLNNKHDLHLRPGTY</sequence>
<protein>
    <recommendedName>
        <fullName>Transposon Ty1-LR2 Gag polyprotein</fullName>
    </recommendedName>
    <alternativeName>
        <fullName>Gag-p49</fullName>
    </alternativeName>
    <alternativeName>
        <fullName>Transposon Ty1 protein A</fullName>
        <shortName>TY1A</shortName>
        <shortName>TYA</shortName>
    </alternativeName>
    <alternativeName>
        <fullName>p58</fullName>
    </alternativeName>
    <component>
        <recommendedName>
            <fullName>Capsid protein</fullName>
            <shortName>CA</shortName>
        </recommendedName>
        <alternativeName>
            <fullName>Gag-p45</fullName>
        </alternativeName>
        <alternativeName>
            <fullName>p54</fullName>
        </alternativeName>
    </component>
    <component>
        <recommendedName>
            <fullName>Gag-p4</fullName>
        </recommendedName>
    </component>
</protein>
<feature type="chain" id="PRO_0000409794" description="Transposon Ty1-LR2 Gag polyprotein">
    <location>
        <begin position="1"/>
        <end position="440"/>
    </location>
</feature>
<feature type="chain" id="PRO_0000409795" description="Capsid protein" evidence="1">
    <location>
        <begin position="1"/>
        <end position="401"/>
    </location>
</feature>
<feature type="peptide" id="PRO_0000409796" description="Gag-p4" evidence="1">
    <location>
        <begin position="402"/>
        <end position="440"/>
    </location>
</feature>
<feature type="region of interest" description="Disordered" evidence="3">
    <location>
        <begin position="1"/>
        <end position="93"/>
    </location>
</feature>
<feature type="region of interest" description="Disordered" evidence="3">
    <location>
        <begin position="126"/>
        <end position="174"/>
    </location>
</feature>
<feature type="region of interest" description="RNA-binding" evidence="1">
    <location>
        <begin position="299"/>
        <end position="401"/>
    </location>
</feature>
<feature type="region of interest" description="Disordered" evidence="3">
    <location>
        <begin position="352"/>
        <end position="440"/>
    </location>
</feature>
<feature type="compositionally biased region" description="Polar residues" evidence="3">
    <location>
        <begin position="1"/>
        <end position="23"/>
    </location>
</feature>
<feature type="compositionally biased region" description="Polar residues" evidence="3">
    <location>
        <begin position="48"/>
        <end position="60"/>
    </location>
</feature>
<feature type="compositionally biased region" description="Polar residues" evidence="3">
    <location>
        <begin position="127"/>
        <end position="152"/>
    </location>
</feature>
<feature type="compositionally biased region" description="Low complexity" evidence="3">
    <location>
        <begin position="153"/>
        <end position="165"/>
    </location>
</feature>
<feature type="compositionally biased region" description="Low complexity" evidence="3">
    <location>
        <begin position="402"/>
        <end position="418"/>
    </location>
</feature>
<feature type="compositionally biased region" description="Polar residues" evidence="3">
    <location>
        <begin position="419"/>
        <end position="428"/>
    </location>
</feature>
<feature type="compositionally biased region" description="Basic and acidic residues" evidence="3">
    <location>
        <begin position="429"/>
        <end position="440"/>
    </location>
</feature>
<feature type="site" description="Cleavage; by Ty1 protease" evidence="1">
    <location>
        <begin position="401"/>
        <end position="402"/>
    </location>
</feature>
<feature type="modified residue" description="Phosphoserine" evidence="2">
    <location>
        <position position="416"/>
    </location>
</feature>
<gene>
    <name type="primary">TY1A-LR2</name>
    <name type="synonym">YLRCTy1-2 GAG</name>
    <name type="ordered locus">YLR157C-A</name>
    <name type="ORF">L9632.7</name>
</gene>
<reference key="1">
    <citation type="journal article" date="1997" name="Nature">
        <title>The nucleotide sequence of Saccharomyces cerevisiae chromosome XII.</title>
        <authorList>
            <person name="Johnston M."/>
            <person name="Hillier L.W."/>
            <person name="Riles L."/>
            <person name="Albermann K."/>
            <person name="Andre B."/>
            <person name="Ansorge W."/>
            <person name="Benes V."/>
            <person name="Brueckner M."/>
            <person name="Delius H."/>
            <person name="Dubois E."/>
            <person name="Duesterhoeft A."/>
            <person name="Entian K.-D."/>
            <person name="Floeth M."/>
            <person name="Goffeau A."/>
            <person name="Hebling U."/>
            <person name="Heumann K."/>
            <person name="Heuss-Neitzel D."/>
            <person name="Hilbert H."/>
            <person name="Hilger F."/>
            <person name="Kleine K."/>
            <person name="Koetter P."/>
            <person name="Louis E.J."/>
            <person name="Messenguy F."/>
            <person name="Mewes H.-W."/>
            <person name="Miosga T."/>
            <person name="Moestl D."/>
            <person name="Mueller-Auer S."/>
            <person name="Nentwich U."/>
            <person name="Obermaier B."/>
            <person name="Piravandi E."/>
            <person name="Pohl T.M."/>
            <person name="Portetelle D."/>
            <person name="Purnelle B."/>
            <person name="Rechmann S."/>
            <person name="Rieger M."/>
            <person name="Rinke M."/>
            <person name="Rose M."/>
            <person name="Scharfe M."/>
            <person name="Scherens B."/>
            <person name="Scholler P."/>
            <person name="Schwager C."/>
            <person name="Schwarz S."/>
            <person name="Underwood A.P."/>
            <person name="Urrestarazu L.A."/>
            <person name="Vandenbol M."/>
            <person name="Verhasselt P."/>
            <person name="Vierendeels F."/>
            <person name="Voet M."/>
            <person name="Volckaert G."/>
            <person name="Voss H."/>
            <person name="Wambutt R."/>
            <person name="Wedler E."/>
            <person name="Wedler H."/>
            <person name="Zimmermann F.K."/>
            <person name="Zollner A."/>
            <person name="Hani J."/>
            <person name="Hoheisel J.D."/>
        </authorList>
    </citation>
    <scope>NUCLEOTIDE SEQUENCE [LARGE SCALE GENOMIC DNA]</scope>
    <source>
        <strain>ATCC 204508 / S288c</strain>
    </source>
</reference>
<reference key="2">
    <citation type="journal article" date="2014" name="G3 (Bethesda)">
        <title>The reference genome sequence of Saccharomyces cerevisiae: Then and now.</title>
        <authorList>
            <person name="Engel S.R."/>
            <person name="Dietrich F.S."/>
            <person name="Fisk D.G."/>
            <person name="Binkley G."/>
            <person name="Balakrishnan R."/>
            <person name="Costanzo M.C."/>
            <person name="Dwight S.S."/>
            <person name="Hitz B.C."/>
            <person name="Karra K."/>
            <person name="Nash R.S."/>
            <person name="Weng S."/>
            <person name="Wong E.D."/>
            <person name="Lloyd P."/>
            <person name="Skrzypek M.S."/>
            <person name="Miyasato S.R."/>
            <person name="Simison M."/>
            <person name="Cherry J.M."/>
        </authorList>
    </citation>
    <scope>GENOME REANNOTATION</scope>
    <source>
        <strain>ATCC 204508 / S288c</strain>
    </source>
</reference>
<reference key="3">
    <citation type="journal article" date="1998" name="Genome Res.">
        <title>Transposable elements and genome organization: a comprehensive survey of retrotransposons revealed by the complete Saccharomyces cerevisiae genome sequence.</title>
        <authorList>
            <person name="Kim J.M."/>
            <person name="Vanguri S."/>
            <person name="Boeke J.D."/>
            <person name="Gabriel A."/>
            <person name="Voytas D.F."/>
        </authorList>
    </citation>
    <scope>NOMENCLATURE</scope>
</reference>
<reference key="4">
    <citation type="journal article" date="2002" name="Mol. Cell. Biol.">
        <title>Differential effects of chromatin and Gcn4 on the 50-fold range of expression among individual yeast Ty1 retrotransposons.</title>
        <authorList>
            <person name="Morillon A."/>
            <person name="Benard L."/>
            <person name="Springer M."/>
            <person name="Lesage P."/>
        </authorList>
    </citation>
    <scope>INDUCTION</scope>
</reference>
<reference key="5">
    <citation type="journal article" date="2005" name="Cytogenet. Genome Res.">
        <title>Happy together: the life and times of Ty retrotransposons and their hosts.</title>
        <authorList>
            <person name="Lesage P."/>
            <person name="Todeschini A.L."/>
        </authorList>
    </citation>
    <scope>REVIEW</scope>
</reference>
<dbReference type="EMBL" id="U51921">
    <property type="status" value="NOT_ANNOTATED_CDS"/>
    <property type="molecule type" value="Genomic_DNA"/>
</dbReference>
<dbReference type="EMBL" id="BK006945">
    <property type="protein sequence ID" value="DAA09475.1"/>
    <property type="molecule type" value="Genomic_DNA"/>
</dbReference>
<dbReference type="PIR" id="S53553">
    <property type="entry name" value="S53553"/>
</dbReference>
<dbReference type="RefSeq" id="NP_058153.3">
    <molecule id="P0CX72-1"/>
    <property type="nucleotide sequence ID" value="NM_001184426.3"/>
</dbReference>
<dbReference type="RefSeq" id="NP_058155.1">
    <molecule id="P0CX72-1"/>
    <property type="nucleotide sequence ID" value="NM_001184428.1"/>
</dbReference>
<dbReference type="RefSeq" id="NP_058170.1">
    <molecule id="P0CX72-1"/>
    <property type="nucleotide sequence ID" value="NM_001184405.1"/>
</dbReference>
<dbReference type="RefSeq" id="NP_058190.1">
    <molecule id="P0CX72-1"/>
    <property type="nucleotide sequence ID" value="NM_001184391.1"/>
</dbReference>
<dbReference type="SMR" id="P0CX72"/>
<dbReference type="BioGRID" id="31430">
    <property type="interactions" value="6"/>
</dbReference>
<dbReference type="BioGRID" id="32423">
    <property type="interactions" value="5"/>
</dbReference>
<dbReference type="BioGRID" id="35904">
    <property type="interactions" value="19"/>
</dbReference>
<dbReference type="BioGRID" id="36886">
    <property type="interactions" value="6"/>
</dbReference>
<dbReference type="FunCoup" id="P0CX72">
    <property type="interactions" value="67"/>
</dbReference>
<dbReference type="GlyGen" id="P0CX72">
    <property type="glycosylation" value="2 sites"/>
</dbReference>
<dbReference type="GeneID" id="850854"/>
<dbReference type="KEGG" id="sce:YDR365W-A"/>
<dbReference type="KEGG" id="sce:YER137C-A"/>
<dbReference type="KEGG" id="sce:YLR157C-A"/>
<dbReference type="KEGG" id="sce:YPL257W-A"/>
<dbReference type="AGR" id="SGD:S000007373"/>
<dbReference type="SGD" id="S000007373">
    <property type="gene designation" value="YLR157C-A"/>
</dbReference>
<dbReference type="VEuPathDB" id="FungiDB:YDR365W-A"/>
<dbReference type="VEuPathDB" id="FungiDB:YER137C-A"/>
<dbReference type="VEuPathDB" id="FungiDB:YLR157C-A"/>
<dbReference type="VEuPathDB" id="FungiDB:YPL257W-A"/>
<dbReference type="HOGENOM" id="CLU_045291_1_0_1"/>
<dbReference type="InParanoid" id="P0CX72"/>
<dbReference type="OrthoDB" id="4051386at2759"/>
<dbReference type="Proteomes" id="UP000002311">
    <property type="component" value="Chromosome XII"/>
</dbReference>
<dbReference type="RNAct" id="P0CX72">
    <property type="molecule type" value="protein"/>
</dbReference>
<dbReference type="GO" id="GO:0005737">
    <property type="term" value="C:cytoplasm"/>
    <property type="evidence" value="ECO:0007669"/>
    <property type="project" value="UniProtKB-SubCell"/>
</dbReference>
<dbReference type="GO" id="GO:0003723">
    <property type="term" value="F:RNA binding"/>
    <property type="evidence" value="ECO:0007669"/>
    <property type="project" value="UniProtKB-KW"/>
</dbReference>
<dbReference type="GO" id="GO:0075523">
    <property type="term" value="P:viral translational frameshifting"/>
    <property type="evidence" value="ECO:0007669"/>
    <property type="project" value="UniProtKB-KW"/>
</dbReference>
<dbReference type="InterPro" id="IPR015820">
    <property type="entry name" value="TYA"/>
</dbReference>
<dbReference type="Pfam" id="PF01021">
    <property type="entry name" value="TYA"/>
    <property type="match status" value="1"/>
</dbReference>
<evidence type="ECO:0000250" key="1"/>
<evidence type="ECO:0000250" key="2">
    <source>
        <dbReference type="UniProtKB" id="Q12441"/>
    </source>
</evidence>
<evidence type="ECO:0000256" key="3">
    <source>
        <dbReference type="SAM" id="MobiDB-lite"/>
    </source>
</evidence>
<evidence type="ECO:0000269" key="4">
    <source>
    </source>
</evidence>
<organism>
    <name type="scientific">Saccharomyces cerevisiae (strain ATCC 204508 / S288c)</name>
    <name type="common">Baker's yeast</name>
    <dbReference type="NCBI Taxonomy" id="559292"/>
    <lineage>
        <taxon>Eukaryota</taxon>
        <taxon>Fungi</taxon>
        <taxon>Dikarya</taxon>
        <taxon>Ascomycota</taxon>
        <taxon>Saccharomycotina</taxon>
        <taxon>Saccharomycetes</taxon>
        <taxon>Saccharomycetales</taxon>
        <taxon>Saccharomycetaceae</taxon>
        <taxon>Saccharomyces</taxon>
    </lineage>
</organism>
<name>YL12A_YEAST</name>
<proteinExistence type="evidence at transcript level"/>
<keyword id="KW-0963">Cytoplasm</keyword>
<keyword id="KW-0597">Phosphoprotein</keyword>
<keyword id="KW-1185">Reference proteome</keyword>
<keyword id="KW-0688">Ribosomal frameshifting</keyword>
<keyword id="KW-0694">RNA-binding</keyword>
<keyword id="KW-0814">Transposable element</keyword>